<name>RPOB_LIRTU</name>
<organism>
    <name type="scientific">Liriodendron tulipifera</name>
    <name type="common">Tuliptree</name>
    <name type="synonym">Tulip poplar</name>
    <dbReference type="NCBI Taxonomy" id="3415"/>
    <lineage>
        <taxon>Eukaryota</taxon>
        <taxon>Viridiplantae</taxon>
        <taxon>Streptophyta</taxon>
        <taxon>Embryophyta</taxon>
        <taxon>Tracheophyta</taxon>
        <taxon>Spermatophyta</taxon>
        <taxon>Magnoliopsida</taxon>
        <taxon>Magnoliidae</taxon>
        <taxon>Magnoliales</taxon>
        <taxon>Magnoliaceae</taxon>
        <taxon>Liriodendron</taxon>
    </lineage>
</organism>
<sequence length="1070" mass="120348">MLRDGNEGMSTIPGFSQIQFEGFCRFIDQGLTEELHKFPKIEDTDQEIEFQLFVETYQLVEPLIKERDAVYESLTYSSELYVPAGLIWKTGRDMQEQTVFIGNIPLMNSLGTSIVNGIYRIVINQILQSPGIYYRSELDHNGISVYTGTIISDWGGRSELEIDRKARIWARVSRKQKISILVLSSAMGSNLREILDNVCYPEIFLSFPNDKEKKKIGSRENAILEFYQQFACVGGDPVFSESLCKELQKKFFQQRCELGRIGRRNMNRRLNLDIPQNNTFLLPRDVLAAADHLIGMKFGMGTLDDMNHLKNKRIRSVADLLQDQFGLALVRLENAVRGTICGAIRHKLIPTPQNLVTSTPLTTTYESFFGLHPLSQVLDRTNPLTQIVHGRKSSYLGPGGLTGRTASFRIRDIHPSHYGRICPIDTSEGINVGLIGSLAIHARIGHWGSIESPFYEISERSKEVQMVYLSPSRDEYYMVAAGNSLALNWGIQEEQVVPARYRQEFLTIAWEQIHLRSIFPFQYFSIGASLIPFIEHNDANRALMSSNMQRQAVPLSRSEKCIVGTGLECQAALDSGVSAIAEHEGKIVYTDTDKIVLSGNGDTISIPLVMYQRSNKNTCMHQKPQVRRGKCIKKGQILADGAATVGGELALGKNVLVAYMPWEGYNSEDAVLISERLVYGDIYTSFHIRKYEIQTHVTSQGPERITNEIPHLEAHLLRNLDKNGIVMLGSWIETGDILVGKLTPQTAKESSYAPEDRLLRAILGIQVSTAKETCLKLPIGGRGRVIDVRWIQKKGGSSYNPEMIRVYISQKREIKVGDKVAGRHGNKGIISKILPRQDMPYLQDGTPVDMVFNPLGVPSRMNVGQIFECSLGLAGDLLDRHYRIAPFDERYEQEASRKLVFSELYSASKQTANPWVFEPECPGKSRIFDGRTGDPFEQPVIIGKSYILKLIHQVDDKIHGRSSGHYALVTQQPLRGRAKQGGQRVGEMEVWALEGFGVAHISQEMLTYKSDHIRARQEVLGTTIIGGTIPNPEDAPESFRLLVRELRSLALELNHFLVSEKNFQINRKEA</sequence>
<accession>Q0G9M7</accession>
<reference key="1">
    <citation type="journal article" date="2006" name="BMC Evol. Biol.">
        <title>Complete plastid genome sequences of Drimys, Liriodendron, and Piper: implications for the phylogenetic relationships of magnoliids.</title>
        <authorList>
            <person name="Cai Z."/>
            <person name="Penaflor C."/>
            <person name="Kuehl J.V."/>
            <person name="Leebens-Mack J."/>
            <person name="Carlson J.E."/>
            <person name="dePamphilis C.W."/>
            <person name="Boore J.L."/>
            <person name="Jansen R.K."/>
        </authorList>
    </citation>
    <scope>NUCLEOTIDE SEQUENCE [LARGE SCALE GENOMIC DNA]</scope>
</reference>
<proteinExistence type="inferred from homology"/>
<evidence type="ECO:0000255" key="1">
    <source>
        <dbReference type="HAMAP-Rule" id="MF_01321"/>
    </source>
</evidence>
<evidence type="ECO:0000305" key="2"/>
<feature type="chain" id="PRO_0000276591" description="DNA-directed RNA polymerase subunit beta">
    <location>
        <begin position="1"/>
        <end position="1070"/>
    </location>
</feature>
<gene>
    <name evidence="1" type="primary">rpoB</name>
</gene>
<protein>
    <recommendedName>
        <fullName evidence="1">DNA-directed RNA polymerase subunit beta</fullName>
        <ecNumber evidence="1">2.7.7.6</ecNumber>
    </recommendedName>
    <alternativeName>
        <fullName evidence="1">PEP</fullName>
    </alternativeName>
    <alternativeName>
        <fullName evidence="1">Plastid-encoded RNA polymerase subunit beta</fullName>
        <shortName evidence="1">RNA polymerase subunit beta</shortName>
    </alternativeName>
</protein>
<comment type="function">
    <text evidence="1">DNA-dependent RNA polymerase catalyzes the transcription of DNA into RNA using the four ribonucleoside triphosphates as substrates.</text>
</comment>
<comment type="catalytic activity">
    <reaction evidence="1">
        <text>RNA(n) + a ribonucleoside 5'-triphosphate = RNA(n+1) + diphosphate</text>
        <dbReference type="Rhea" id="RHEA:21248"/>
        <dbReference type="Rhea" id="RHEA-COMP:14527"/>
        <dbReference type="Rhea" id="RHEA-COMP:17342"/>
        <dbReference type="ChEBI" id="CHEBI:33019"/>
        <dbReference type="ChEBI" id="CHEBI:61557"/>
        <dbReference type="ChEBI" id="CHEBI:140395"/>
        <dbReference type="EC" id="2.7.7.6"/>
    </reaction>
</comment>
<comment type="subunit">
    <text evidence="1">In plastids the minimal PEP RNA polymerase catalytic core is composed of four subunits: alpha, beta, beta', and beta''. When a (nuclear-encoded) sigma factor is associated with the core the holoenzyme is formed, which can initiate transcription.</text>
</comment>
<comment type="subcellular location">
    <subcellularLocation>
        <location>Plastid</location>
        <location>Chloroplast</location>
    </subcellularLocation>
</comment>
<comment type="similarity">
    <text evidence="1">Belongs to the RNA polymerase beta chain family.</text>
</comment>
<comment type="sequence caution" evidence="2">
    <conflict type="erroneous initiation">
        <sequence resource="EMBL-CDS" id="ABI32501"/>
    </conflict>
</comment>
<dbReference type="EC" id="2.7.7.6" evidence="1"/>
<dbReference type="EMBL" id="DQ899947">
    <property type="protein sequence ID" value="ABI32501.1"/>
    <property type="status" value="ALT_INIT"/>
    <property type="molecule type" value="Genomic_DNA"/>
</dbReference>
<dbReference type="RefSeq" id="YP_740194.1">
    <property type="nucleotide sequence ID" value="NC_008326.1"/>
</dbReference>
<dbReference type="SMR" id="Q0G9M7"/>
<dbReference type="GeneID" id="4266602"/>
<dbReference type="GO" id="GO:0009507">
    <property type="term" value="C:chloroplast"/>
    <property type="evidence" value="ECO:0007669"/>
    <property type="project" value="UniProtKB-SubCell"/>
</dbReference>
<dbReference type="GO" id="GO:0000428">
    <property type="term" value="C:DNA-directed RNA polymerase complex"/>
    <property type="evidence" value="ECO:0007669"/>
    <property type="project" value="UniProtKB-KW"/>
</dbReference>
<dbReference type="GO" id="GO:0005739">
    <property type="term" value="C:mitochondrion"/>
    <property type="evidence" value="ECO:0007669"/>
    <property type="project" value="GOC"/>
</dbReference>
<dbReference type="GO" id="GO:0003677">
    <property type="term" value="F:DNA binding"/>
    <property type="evidence" value="ECO:0007669"/>
    <property type="project" value="UniProtKB-UniRule"/>
</dbReference>
<dbReference type="GO" id="GO:0003899">
    <property type="term" value="F:DNA-directed RNA polymerase activity"/>
    <property type="evidence" value="ECO:0007669"/>
    <property type="project" value="UniProtKB-UniRule"/>
</dbReference>
<dbReference type="GO" id="GO:0032549">
    <property type="term" value="F:ribonucleoside binding"/>
    <property type="evidence" value="ECO:0007669"/>
    <property type="project" value="InterPro"/>
</dbReference>
<dbReference type="GO" id="GO:0006351">
    <property type="term" value="P:DNA-templated transcription"/>
    <property type="evidence" value="ECO:0007669"/>
    <property type="project" value="UniProtKB-UniRule"/>
</dbReference>
<dbReference type="CDD" id="cd00653">
    <property type="entry name" value="RNA_pol_B_RPB2"/>
    <property type="match status" value="1"/>
</dbReference>
<dbReference type="FunFam" id="2.40.50.100:FF:000006">
    <property type="entry name" value="DNA-directed RNA polymerase subunit beta"/>
    <property type="match status" value="1"/>
</dbReference>
<dbReference type="FunFam" id="2.40.50.150:FF:000006">
    <property type="entry name" value="DNA-directed RNA polymerase subunit beta"/>
    <property type="match status" value="1"/>
</dbReference>
<dbReference type="FunFam" id="3.90.1110.10:FF:000009">
    <property type="entry name" value="DNA-directed RNA polymerase subunit beta"/>
    <property type="match status" value="1"/>
</dbReference>
<dbReference type="Gene3D" id="2.40.50.100">
    <property type="match status" value="1"/>
</dbReference>
<dbReference type="Gene3D" id="2.40.50.150">
    <property type="match status" value="1"/>
</dbReference>
<dbReference type="Gene3D" id="3.90.1100.10">
    <property type="match status" value="1"/>
</dbReference>
<dbReference type="Gene3D" id="2.30.150.10">
    <property type="entry name" value="DNA-directed RNA polymerase, beta subunit, external 1 domain"/>
    <property type="match status" value="1"/>
</dbReference>
<dbReference type="Gene3D" id="2.40.270.10">
    <property type="entry name" value="DNA-directed RNA polymerase, subunit 2, domain 6"/>
    <property type="match status" value="2"/>
</dbReference>
<dbReference type="Gene3D" id="3.90.1800.10">
    <property type="entry name" value="RNA polymerase alpha subunit dimerisation domain"/>
    <property type="match status" value="1"/>
</dbReference>
<dbReference type="Gene3D" id="3.90.1110.10">
    <property type="entry name" value="RNA polymerase Rpb2, domain 2"/>
    <property type="match status" value="1"/>
</dbReference>
<dbReference type="HAMAP" id="MF_01321">
    <property type="entry name" value="RNApol_bact_RpoB"/>
    <property type="match status" value="1"/>
</dbReference>
<dbReference type="InterPro" id="IPR042107">
    <property type="entry name" value="DNA-dir_RNA_pol_bsu_ext_1_sf"/>
</dbReference>
<dbReference type="InterPro" id="IPR015712">
    <property type="entry name" value="DNA-dir_RNA_pol_su2"/>
</dbReference>
<dbReference type="InterPro" id="IPR007120">
    <property type="entry name" value="DNA-dir_RNAP_su2_dom"/>
</dbReference>
<dbReference type="InterPro" id="IPR037033">
    <property type="entry name" value="DNA-dir_RNAP_su2_hyb_sf"/>
</dbReference>
<dbReference type="InterPro" id="IPR010243">
    <property type="entry name" value="RNA_pol_bsu_bac"/>
</dbReference>
<dbReference type="InterPro" id="IPR007121">
    <property type="entry name" value="RNA_pol_bsu_CS"/>
</dbReference>
<dbReference type="InterPro" id="IPR007642">
    <property type="entry name" value="RNA_pol_Rpb2_2"/>
</dbReference>
<dbReference type="InterPro" id="IPR037034">
    <property type="entry name" value="RNA_pol_Rpb2_2_sf"/>
</dbReference>
<dbReference type="InterPro" id="IPR007645">
    <property type="entry name" value="RNA_pol_Rpb2_3"/>
</dbReference>
<dbReference type="InterPro" id="IPR007641">
    <property type="entry name" value="RNA_pol_Rpb2_7"/>
</dbReference>
<dbReference type="InterPro" id="IPR014724">
    <property type="entry name" value="RNA_pol_RPB2_OB-fold"/>
</dbReference>
<dbReference type="NCBIfam" id="NF001616">
    <property type="entry name" value="PRK00405.1"/>
    <property type="match status" value="1"/>
</dbReference>
<dbReference type="PANTHER" id="PTHR20856">
    <property type="entry name" value="DNA-DIRECTED RNA POLYMERASE I SUBUNIT 2"/>
    <property type="match status" value="1"/>
</dbReference>
<dbReference type="Pfam" id="PF04561">
    <property type="entry name" value="RNA_pol_Rpb2_2"/>
    <property type="match status" value="1"/>
</dbReference>
<dbReference type="Pfam" id="PF04565">
    <property type="entry name" value="RNA_pol_Rpb2_3"/>
    <property type="match status" value="1"/>
</dbReference>
<dbReference type="Pfam" id="PF00562">
    <property type="entry name" value="RNA_pol_Rpb2_6"/>
    <property type="match status" value="1"/>
</dbReference>
<dbReference type="Pfam" id="PF04560">
    <property type="entry name" value="RNA_pol_Rpb2_7"/>
    <property type="match status" value="1"/>
</dbReference>
<dbReference type="SUPFAM" id="SSF64484">
    <property type="entry name" value="beta and beta-prime subunits of DNA dependent RNA-polymerase"/>
    <property type="match status" value="1"/>
</dbReference>
<dbReference type="PROSITE" id="PS01166">
    <property type="entry name" value="RNA_POL_BETA"/>
    <property type="match status" value="1"/>
</dbReference>
<geneLocation type="chloroplast"/>
<keyword id="KW-0150">Chloroplast</keyword>
<keyword id="KW-0240">DNA-directed RNA polymerase</keyword>
<keyword id="KW-0548">Nucleotidyltransferase</keyword>
<keyword id="KW-0934">Plastid</keyword>
<keyword id="KW-0804">Transcription</keyword>
<keyword id="KW-0808">Transferase</keyword>